<evidence type="ECO:0000255" key="1">
    <source>
        <dbReference type="HAMAP-Rule" id="MF_00528"/>
    </source>
</evidence>
<organism>
    <name type="scientific">Geobacter sulfurreducens (strain ATCC 51573 / DSM 12127 / PCA)</name>
    <dbReference type="NCBI Taxonomy" id="243231"/>
    <lineage>
        <taxon>Bacteria</taxon>
        <taxon>Pseudomonadati</taxon>
        <taxon>Thermodesulfobacteriota</taxon>
        <taxon>Desulfuromonadia</taxon>
        <taxon>Geobacterales</taxon>
        <taxon>Geobacteraceae</taxon>
        <taxon>Geobacter</taxon>
    </lineage>
</organism>
<gene>
    <name type="ordered locus">GSU2545</name>
</gene>
<proteinExistence type="inferred from homology"/>
<comment type="function">
    <text evidence="1">Nucleoside triphosphate pyrophosphatase that hydrolyzes dTTP and UTP. May have a dual role in cell division arrest and in preventing the incorporation of modified nucleotides into cellular nucleic acids.</text>
</comment>
<comment type="catalytic activity">
    <reaction evidence="1">
        <text>dTTP + H2O = dTMP + diphosphate + H(+)</text>
        <dbReference type="Rhea" id="RHEA:28534"/>
        <dbReference type="ChEBI" id="CHEBI:15377"/>
        <dbReference type="ChEBI" id="CHEBI:15378"/>
        <dbReference type="ChEBI" id="CHEBI:33019"/>
        <dbReference type="ChEBI" id="CHEBI:37568"/>
        <dbReference type="ChEBI" id="CHEBI:63528"/>
        <dbReference type="EC" id="3.6.1.9"/>
    </reaction>
</comment>
<comment type="catalytic activity">
    <reaction evidence="1">
        <text>UTP + H2O = UMP + diphosphate + H(+)</text>
        <dbReference type="Rhea" id="RHEA:29395"/>
        <dbReference type="ChEBI" id="CHEBI:15377"/>
        <dbReference type="ChEBI" id="CHEBI:15378"/>
        <dbReference type="ChEBI" id="CHEBI:33019"/>
        <dbReference type="ChEBI" id="CHEBI:46398"/>
        <dbReference type="ChEBI" id="CHEBI:57865"/>
        <dbReference type="EC" id="3.6.1.9"/>
    </reaction>
</comment>
<comment type="cofactor">
    <cofactor evidence="1">
        <name>a divalent metal cation</name>
        <dbReference type="ChEBI" id="CHEBI:60240"/>
    </cofactor>
</comment>
<comment type="subcellular location">
    <subcellularLocation>
        <location evidence="1">Cytoplasm</location>
    </subcellularLocation>
</comment>
<comment type="similarity">
    <text evidence="1">Belongs to the Maf family. YhdE subfamily.</text>
</comment>
<reference key="1">
    <citation type="journal article" date="2003" name="Science">
        <title>Genome of Geobacter sulfurreducens: metal reduction in subsurface environments.</title>
        <authorList>
            <person name="Methe B.A."/>
            <person name="Nelson K.E."/>
            <person name="Eisen J.A."/>
            <person name="Paulsen I.T."/>
            <person name="Nelson W.C."/>
            <person name="Heidelberg J.F."/>
            <person name="Wu D."/>
            <person name="Wu M."/>
            <person name="Ward N.L."/>
            <person name="Beanan M.J."/>
            <person name="Dodson R.J."/>
            <person name="Madupu R."/>
            <person name="Brinkac L.M."/>
            <person name="Daugherty S.C."/>
            <person name="DeBoy R.T."/>
            <person name="Durkin A.S."/>
            <person name="Gwinn M.L."/>
            <person name="Kolonay J.F."/>
            <person name="Sullivan S.A."/>
            <person name="Haft D.H."/>
            <person name="Selengut J."/>
            <person name="Davidsen T.M."/>
            <person name="Zafar N."/>
            <person name="White O."/>
            <person name="Tran B."/>
            <person name="Romero C."/>
            <person name="Forberger H.A."/>
            <person name="Weidman J.F."/>
            <person name="Khouri H.M."/>
            <person name="Feldblyum T.V."/>
            <person name="Utterback T.R."/>
            <person name="Van Aken S.E."/>
            <person name="Lovley D.R."/>
            <person name="Fraser C.M."/>
        </authorList>
    </citation>
    <scope>NUCLEOTIDE SEQUENCE [LARGE SCALE GENOMIC DNA]</scope>
    <source>
        <strain>ATCC 51573 / DSM 12127 / PCA</strain>
    </source>
</reference>
<accession>Q74A46</accession>
<name>NTPPA_GEOSL</name>
<feature type="chain" id="PRO_0000267313" description="dTTP/UTP pyrophosphatase">
    <location>
        <begin position="1"/>
        <end position="191"/>
    </location>
</feature>
<feature type="active site" description="Proton acceptor" evidence="1">
    <location>
        <position position="71"/>
    </location>
</feature>
<feature type="site" description="Important for substrate specificity" evidence="1">
    <location>
        <position position="14"/>
    </location>
</feature>
<feature type="site" description="Important for substrate specificity" evidence="1">
    <location>
        <position position="72"/>
    </location>
</feature>
<feature type="site" description="Important for substrate specificity" evidence="1">
    <location>
        <position position="156"/>
    </location>
</feature>
<sequence>MEKGRIVLASASPRRLELLASAGVEFDVCASDIPEEPIPGEAPADFATRLARDKAVATAARTEGRWFVGADTIVVCAGEIMGKPVDEADAVRMLRKLSGVSHEVITGYAVYDRERDGLLCKAVVTKVVFKPLRDEEISAYVATGCPMDKAGAYAIQGGAAYMVERIDGSYTNVVGLPLCEVVEDLRRIGAL</sequence>
<keyword id="KW-0963">Cytoplasm</keyword>
<keyword id="KW-0378">Hydrolase</keyword>
<keyword id="KW-0546">Nucleotide metabolism</keyword>
<keyword id="KW-1185">Reference proteome</keyword>
<dbReference type="EC" id="3.6.1.9" evidence="1"/>
<dbReference type="EMBL" id="AE017180">
    <property type="protein sequence ID" value="AAR35918.1"/>
    <property type="molecule type" value="Genomic_DNA"/>
</dbReference>
<dbReference type="RefSeq" id="NP_953591.1">
    <property type="nucleotide sequence ID" value="NC_002939.5"/>
</dbReference>
<dbReference type="RefSeq" id="WP_010943181.1">
    <property type="nucleotide sequence ID" value="NC_002939.5"/>
</dbReference>
<dbReference type="SMR" id="Q74A46"/>
<dbReference type="FunCoup" id="Q74A46">
    <property type="interactions" value="328"/>
</dbReference>
<dbReference type="STRING" id="243231.GSU2545"/>
<dbReference type="EnsemblBacteria" id="AAR35918">
    <property type="protein sequence ID" value="AAR35918"/>
    <property type="gene ID" value="GSU2545"/>
</dbReference>
<dbReference type="KEGG" id="gsu:GSU2545"/>
<dbReference type="PATRIC" id="fig|243231.5.peg.2575"/>
<dbReference type="eggNOG" id="COG0424">
    <property type="taxonomic scope" value="Bacteria"/>
</dbReference>
<dbReference type="HOGENOM" id="CLU_040416_2_1_7"/>
<dbReference type="InParanoid" id="Q74A46"/>
<dbReference type="OrthoDB" id="9807767at2"/>
<dbReference type="Proteomes" id="UP000000577">
    <property type="component" value="Chromosome"/>
</dbReference>
<dbReference type="GO" id="GO:0005737">
    <property type="term" value="C:cytoplasm"/>
    <property type="evidence" value="ECO:0007669"/>
    <property type="project" value="UniProtKB-SubCell"/>
</dbReference>
<dbReference type="GO" id="GO:0036218">
    <property type="term" value="F:dTTP diphosphatase activity"/>
    <property type="evidence" value="ECO:0007669"/>
    <property type="project" value="RHEA"/>
</dbReference>
<dbReference type="GO" id="GO:0047429">
    <property type="term" value="F:nucleoside triphosphate diphosphatase activity"/>
    <property type="evidence" value="ECO:0000318"/>
    <property type="project" value="GO_Central"/>
</dbReference>
<dbReference type="GO" id="GO:0036221">
    <property type="term" value="F:UTP diphosphatase activity"/>
    <property type="evidence" value="ECO:0007669"/>
    <property type="project" value="RHEA"/>
</dbReference>
<dbReference type="GO" id="GO:0009117">
    <property type="term" value="P:nucleotide metabolic process"/>
    <property type="evidence" value="ECO:0007669"/>
    <property type="project" value="UniProtKB-KW"/>
</dbReference>
<dbReference type="CDD" id="cd00555">
    <property type="entry name" value="Maf"/>
    <property type="match status" value="1"/>
</dbReference>
<dbReference type="FunFam" id="3.90.950.10:FF:000005">
    <property type="entry name" value="7-methyl-GTP pyrophosphatase"/>
    <property type="match status" value="1"/>
</dbReference>
<dbReference type="Gene3D" id="3.90.950.10">
    <property type="match status" value="1"/>
</dbReference>
<dbReference type="HAMAP" id="MF_00528">
    <property type="entry name" value="Maf"/>
    <property type="match status" value="1"/>
</dbReference>
<dbReference type="InterPro" id="IPR029001">
    <property type="entry name" value="ITPase-like_fam"/>
</dbReference>
<dbReference type="InterPro" id="IPR003697">
    <property type="entry name" value="Maf-like"/>
</dbReference>
<dbReference type="NCBIfam" id="TIGR00172">
    <property type="entry name" value="maf"/>
    <property type="match status" value="1"/>
</dbReference>
<dbReference type="NCBIfam" id="NF010948">
    <property type="entry name" value="PRK14368.1"/>
    <property type="match status" value="1"/>
</dbReference>
<dbReference type="PANTHER" id="PTHR43213">
    <property type="entry name" value="BIFUNCTIONAL DTTP/UTP PYROPHOSPHATASE/METHYLTRANSFERASE PROTEIN-RELATED"/>
    <property type="match status" value="1"/>
</dbReference>
<dbReference type="PANTHER" id="PTHR43213:SF5">
    <property type="entry name" value="BIFUNCTIONAL DTTP_UTP PYROPHOSPHATASE_METHYLTRANSFERASE PROTEIN-RELATED"/>
    <property type="match status" value="1"/>
</dbReference>
<dbReference type="Pfam" id="PF02545">
    <property type="entry name" value="Maf"/>
    <property type="match status" value="1"/>
</dbReference>
<dbReference type="PIRSF" id="PIRSF006305">
    <property type="entry name" value="Maf"/>
    <property type="match status" value="1"/>
</dbReference>
<dbReference type="SUPFAM" id="SSF52972">
    <property type="entry name" value="ITPase-like"/>
    <property type="match status" value="1"/>
</dbReference>
<protein>
    <recommendedName>
        <fullName evidence="1">dTTP/UTP pyrophosphatase</fullName>
        <shortName evidence="1">dTTPase/UTPase</shortName>
        <ecNumber evidence="1">3.6.1.9</ecNumber>
    </recommendedName>
    <alternativeName>
        <fullName evidence="1">Nucleoside triphosphate pyrophosphatase</fullName>
    </alternativeName>
    <alternativeName>
        <fullName evidence="1">Nucleotide pyrophosphatase</fullName>
        <shortName evidence="1">Nucleotide PPase</shortName>
    </alternativeName>
</protein>